<sequence length="81" mass="8010">MDPTIAAGALIGGGLIMAGGAIGAGIGDGIAGNALIAGIARQPEAQGRLFTPFFITVGLVEAAYFINLAFMALFVFATPVA</sequence>
<keyword id="KW-0066">ATP synthesis</keyword>
<keyword id="KW-1003">Cell membrane</keyword>
<keyword id="KW-0138">CF(0)</keyword>
<keyword id="KW-0375">Hydrogen ion transport</keyword>
<keyword id="KW-0406">Ion transport</keyword>
<keyword id="KW-0446">Lipid-binding</keyword>
<keyword id="KW-0472">Membrane</keyword>
<keyword id="KW-0812">Transmembrane</keyword>
<keyword id="KW-1133">Transmembrane helix</keyword>
<keyword id="KW-0813">Transport</keyword>
<comment type="function">
    <text evidence="1">F(1)F(0) ATP synthase produces ATP from ADP in the presence of a proton or sodium gradient. F-type ATPases consist of two structural domains, F(1) containing the extramembraneous catalytic core and F(0) containing the membrane proton channel, linked together by a central stalk and a peripheral stalk. During catalysis, ATP synthesis in the catalytic domain of F(1) is coupled via a rotary mechanism of the central stalk subunits to proton translocation.</text>
</comment>
<comment type="function">
    <text evidence="1">Key component of the F(0) channel; it plays a direct role in translocation across the membrane. A homomeric c-ring of between 10-14 subunits forms the central stalk rotor element with the F(1) delta and epsilon subunits.</text>
</comment>
<comment type="subunit">
    <text evidence="1">F-type ATPases have 2 components, F(1) - the catalytic core - and F(0) - the membrane proton channel. F(1) has five subunits: alpha(3), beta(3), gamma(1), delta(1), epsilon(1). F(0) has three main subunits: a(1), b(2) and c(10-14). The alpha and beta chains form an alternating ring which encloses part of the gamma chain. F(1) is attached to F(0) by a central stalk formed by the gamma and epsilon chains, while a peripheral stalk is formed by the delta and b chains.</text>
</comment>
<comment type="subcellular location">
    <subcellularLocation>
        <location evidence="1">Cell membrane</location>
        <topology evidence="1">Multi-pass membrane protein</topology>
    </subcellularLocation>
</comment>
<comment type="similarity">
    <text evidence="1">Belongs to the ATPase C chain family.</text>
</comment>
<gene>
    <name evidence="1" type="primary">atpE</name>
    <name type="ordered locus">Mkms_3955</name>
</gene>
<evidence type="ECO:0000255" key="1">
    <source>
        <dbReference type="HAMAP-Rule" id="MF_01396"/>
    </source>
</evidence>
<reference key="1">
    <citation type="submission" date="2006-12" db="EMBL/GenBank/DDBJ databases">
        <title>Complete sequence of chromosome of Mycobacterium sp. KMS.</title>
        <authorList>
            <consortium name="US DOE Joint Genome Institute"/>
            <person name="Copeland A."/>
            <person name="Lucas S."/>
            <person name="Lapidus A."/>
            <person name="Barry K."/>
            <person name="Detter J.C."/>
            <person name="Glavina del Rio T."/>
            <person name="Hammon N."/>
            <person name="Israni S."/>
            <person name="Dalin E."/>
            <person name="Tice H."/>
            <person name="Pitluck S."/>
            <person name="Kiss H."/>
            <person name="Brettin T."/>
            <person name="Bruce D."/>
            <person name="Han C."/>
            <person name="Tapia R."/>
            <person name="Gilna P."/>
            <person name="Schmutz J."/>
            <person name="Larimer F."/>
            <person name="Land M."/>
            <person name="Hauser L."/>
            <person name="Kyrpides N."/>
            <person name="Mikhailova N."/>
            <person name="Miller C.D."/>
            <person name="Richardson P."/>
        </authorList>
    </citation>
    <scope>NUCLEOTIDE SEQUENCE [LARGE SCALE GENOMIC DNA]</scope>
    <source>
        <strain>KMS</strain>
    </source>
</reference>
<name>ATPL_MYCSK</name>
<proteinExistence type="inferred from homology"/>
<dbReference type="EMBL" id="CP000518">
    <property type="protein sequence ID" value="ABL93147.1"/>
    <property type="molecule type" value="Genomic_DNA"/>
</dbReference>
<dbReference type="SMR" id="A1UJY9"/>
<dbReference type="STRING" id="189918.Mkms_3955"/>
<dbReference type="KEGG" id="mkm:Mkms_3955"/>
<dbReference type="HOGENOM" id="CLU_148047_1_2_11"/>
<dbReference type="OrthoDB" id="3578447at2"/>
<dbReference type="GO" id="GO:0005886">
    <property type="term" value="C:plasma membrane"/>
    <property type="evidence" value="ECO:0007669"/>
    <property type="project" value="UniProtKB-SubCell"/>
</dbReference>
<dbReference type="GO" id="GO:0045259">
    <property type="term" value="C:proton-transporting ATP synthase complex"/>
    <property type="evidence" value="ECO:0007669"/>
    <property type="project" value="UniProtKB-KW"/>
</dbReference>
<dbReference type="GO" id="GO:0033177">
    <property type="term" value="C:proton-transporting two-sector ATPase complex, proton-transporting domain"/>
    <property type="evidence" value="ECO:0007669"/>
    <property type="project" value="InterPro"/>
</dbReference>
<dbReference type="GO" id="GO:0008289">
    <property type="term" value="F:lipid binding"/>
    <property type="evidence" value="ECO:0007669"/>
    <property type="project" value="UniProtKB-KW"/>
</dbReference>
<dbReference type="GO" id="GO:0046933">
    <property type="term" value="F:proton-transporting ATP synthase activity, rotational mechanism"/>
    <property type="evidence" value="ECO:0007669"/>
    <property type="project" value="UniProtKB-UniRule"/>
</dbReference>
<dbReference type="Gene3D" id="1.20.20.10">
    <property type="entry name" value="F1F0 ATP synthase subunit C"/>
    <property type="match status" value="1"/>
</dbReference>
<dbReference type="HAMAP" id="MF_01396">
    <property type="entry name" value="ATP_synth_c_bact"/>
    <property type="match status" value="1"/>
</dbReference>
<dbReference type="InterPro" id="IPR005953">
    <property type="entry name" value="ATP_synth_csu_bac/chlpt"/>
</dbReference>
<dbReference type="InterPro" id="IPR000454">
    <property type="entry name" value="ATP_synth_F0_csu"/>
</dbReference>
<dbReference type="InterPro" id="IPR020537">
    <property type="entry name" value="ATP_synth_F0_csu_DDCD_BS"/>
</dbReference>
<dbReference type="InterPro" id="IPR038662">
    <property type="entry name" value="ATP_synth_F0_csu_sf"/>
</dbReference>
<dbReference type="InterPro" id="IPR002379">
    <property type="entry name" value="ATPase_proteolipid_c-like_dom"/>
</dbReference>
<dbReference type="InterPro" id="IPR035921">
    <property type="entry name" value="F/V-ATP_Csub_sf"/>
</dbReference>
<dbReference type="NCBIfam" id="TIGR01260">
    <property type="entry name" value="ATP_synt_c"/>
    <property type="match status" value="1"/>
</dbReference>
<dbReference type="NCBIfam" id="NF004532">
    <property type="entry name" value="PRK05880.1"/>
    <property type="match status" value="1"/>
</dbReference>
<dbReference type="Pfam" id="PF00137">
    <property type="entry name" value="ATP-synt_C"/>
    <property type="match status" value="1"/>
</dbReference>
<dbReference type="PRINTS" id="PR00124">
    <property type="entry name" value="ATPASEC"/>
</dbReference>
<dbReference type="SUPFAM" id="SSF81333">
    <property type="entry name" value="F1F0 ATP synthase subunit C"/>
    <property type="match status" value="1"/>
</dbReference>
<dbReference type="PROSITE" id="PS00605">
    <property type="entry name" value="ATPASE_C"/>
    <property type="match status" value="1"/>
</dbReference>
<protein>
    <recommendedName>
        <fullName evidence="1">ATP synthase subunit c</fullName>
    </recommendedName>
    <alternativeName>
        <fullName evidence="1">ATP synthase F(0) sector subunit c</fullName>
    </alternativeName>
    <alternativeName>
        <fullName evidence="1">F-type ATPase subunit c</fullName>
        <shortName evidence="1">F-ATPase subunit c</shortName>
    </alternativeName>
    <alternativeName>
        <fullName evidence="1">Lipid-binding protein</fullName>
    </alternativeName>
</protein>
<feature type="chain" id="PRO_1000184419" description="ATP synthase subunit c">
    <location>
        <begin position="1"/>
        <end position="81"/>
    </location>
</feature>
<feature type="transmembrane region" description="Helical" evidence="1">
    <location>
        <begin position="5"/>
        <end position="25"/>
    </location>
</feature>
<feature type="transmembrane region" description="Helical" evidence="1">
    <location>
        <begin position="57"/>
        <end position="77"/>
    </location>
</feature>
<feature type="site" description="Reversibly protonated during proton transport" evidence="1">
    <location>
        <position position="61"/>
    </location>
</feature>
<organism>
    <name type="scientific">Mycobacterium sp. (strain KMS)</name>
    <dbReference type="NCBI Taxonomy" id="189918"/>
    <lineage>
        <taxon>Bacteria</taxon>
        <taxon>Bacillati</taxon>
        <taxon>Actinomycetota</taxon>
        <taxon>Actinomycetes</taxon>
        <taxon>Mycobacteriales</taxon>
        <taxon>Mycobacteriaceae</taxon>
        <taxon>Mycobacterium</taxon>
    </lineage>
</organism>
<accession>A1UJY9</accession>